<name>TIG_SALCH</name>
<evidence type="ECO:0000255" key="1">
    <source>
        <dbReference type="HAMAP-Rule" id="MF_00303"/>
    </source>
</evidence>
<feature type="chain" id="PRO_0000256614" description="Trigger factor">
    <location>
        <begin position="1"/>
        <end position="432"/>
    </location>
</feature>
<feature type="domain" description="PPIase FKBP-type" evidence="1">
    <location>
        <begin position="161"/>
        <end position="246"/>
    </location>
</feature>
<comment type="function">
    <text evidence="1">Involved in protein export. Acts as a chaperone by maintaining the newly synthesized protein in an open conformation. Functions as a peptidyl-prolyl cis-trans isomerase.</text>
</comment>
<comment type="catalytic activity">
    <reaction evidence="1">
        <text>[protein]-peptidylproline (omega=180) = [protein]-peptidylproline (omega=0)</text>
        <dbReference type="Rhea" id="RHEA:16237"/>
        <dbReference type="Rhea" id="RHEA-COMP:10747"/>
        <dbReference type="Rhea" id="RHEA-COMP:10748"/>
        <dbReference type="ChEBI" id="CHEBI:83833"/>
        <dbReference type="ChEBI" id="CHEBI:83834"/>
        <dbReference type="EC" id="5.2.1.8"/>
    </reaction>
</comment>
<comment type="subcellular location">
    <subcellularLocation>
        <location>Cytoplasm</location>
    </subcellularLocation>
    <text evidence="1">About half TF is bound to the ribosome near the polypeptide exit tunnel while the other half is free in the cytoplasm.</text>
</comment>
<comment type="domain">
    <text evidence="1">Consists of 3 domains; the N-terminus binds the ribosome, the middle domain has PPIase activity, while the C-terminus has intrinsic chaperone activity on its own.</text>
</comment>
<comment type="similarity">
    <text evidence="1">Belongs to the FKBP-type PPIase family. Tig subfamily.</text>
</comment>
<protein>
    <recommendedName>
        <fullName evidence="1">Trigger factor</fullName>
        <shortName evidence="1">TF</shortName>
        <ecNumber evidence="1">5.2.1.8</ecNumber>
    </recommendedName>
    <alternativeName>
        <fullName evidence="1">PPIase</fullName>
    </alternativeName>
</protein>
<accession>Q57SB6</accession>
<keyword id="KW-0131">Cell cycle</keyword>
<keyword id="KW-0132">Cell division</keyword>
<keyword id="KW-0143">Chaperone</keyword>
<keyword id="KW-0963">Cytoplasm</keyword>
<keyword id="KW-0413">Isomerase</keyword>
<keyword id="KW-0697">Rotamase</keyword>
<gene>
    <name evidence="1" type="primary">tig</name>
    <name type="ordered locus">SCH_0489</name>
</gene>
<dbReference type="EC" id="5.2.1.8" evidence="1"/>
<dbReference type="EMBL" id="AE017220">
    <property type="protein sequence ID" value="AAX64395.1"/>
    <property type="molecule type" value="Genomic_DNA"/>
</dbReference>
<dbReference type="RefSeq" id="WP_001198408.1">
    <property type="nucleotide sequence ID" value="NC_006905.1"/>
</dbReference>
<dbReference type="SMR" id="Q57SB6"/>
<dbReference type="KEGG" id="sec:SCH_0489"/>
<dbReference type="HOGENOM" id="CLU_033058_2_0_6"/>
<dbReference type="Proteomes" id="UP000000538">
    <property type="component" value="Chromosome"/>
</dbReference>
<dbReference type="GO" id="GO:0005737">
    <property type="term" value="C:cytoplasm"/>
    <property type="evidence" value="ECO:0007669"/>
    <property type="project" value="UniProtKB-SubCell"/>
</dbReference>
<dbReference type="GO" id="GO:0003755">
    <property type="term" value="F:peptidyl-prolyl cis-trans isomerase activity"/>
    <property type="evidence" value="ECO:0007669"/>
    <property type="project" value="UniProtKB-UniRule"/>
</dbReference>
<dbReference type="GO" id="GO:0044183">
    <property type="term" value="F:protein folding chaperone"/>
    <property type="evidence" value="ECO:0007669"/>
    <property type="project" value="TreeGrafter"/>
</dbReference>
<dbReference type="GO" id="GO:0043022">
    <property type="term" value="F:ribosome binding"/>
    <property type="evidence" value="ECO:0007669"/>
    <property type="project" value="TreeGrafter"/>
</dbReference>
<dbReference type="GO" id="GO:0051083">
    <property type="term" value="P:'de novo' cotranslational protein folding"/>
    <property type="evidence" value="ECO:0007669"/>
    <property type="project" value="TreeGrafter"/>
</dbReference>
<dbReference type="GO" id="GO:0051301">
    <property type="term" value="P:cell division"/>
    <property type="evidence" value="ECO:0007669"/>
    <property type="project" value="UniProtKB-KW"/>
</dbReference>
<dbReference type="GO" id="GO:0061077">
    <property type="term" value="P:chaperone-mediated protein folding"/>
    <property type="evidence" value="ECO:0007669"/>
    <property type="project" value="TreeGrafter"/>
</dbReference>
<dbReference type="GO" id="GO:0015031">
    <property type="term" value="P:protein transport"/>
    <property type="evidence" value="ECO:0007669"/>
    <property type="project" value="UniProtKB-UniRule"/>
</dbReference>
<dbReference type="GO" id="GO:0043335">
    <property type="term" value="P:protein unfolding"/>
    <property type="evidence" value="ECO:0007669"/>
    <property type="project" value="TreeGrafter"/>
</dbReference>
<dbReference type="FunFam" id="1.10.3120.10:FF:000001">
    <property type="entry name" value="Trigger factor"/>
    <property type="match status" value="1"/>
</dbReference>
<dbReference type="FunFam" id="3.10.50.40:FF:000001">
    <property type="entry name" value="Trigger factor"/>
    <property type="match status" value="1"/>
</dbReference>
<dbReference type="FunFam" id="3.30.70.1050:FF:000001">
    <property type="entry name" value="Trigger factor"/>
    <property type="match status" value="1"/>
</dbReference>
<dbReference type="Gene3D" id="3.10.50.40">
    <property type="match status" value="1"/>
</dbReference>
<dbReference type="Gene3D" id="3.30.70.1050">
    <property type="entry name" value="Trigger factor ribosome-binding domain"/>
    <property type="match status" value="1"/>
</dbReference>
<dbReference type="Gene3D" id="1.10.3120.10">
    <property type="entry name" value="Trigger factor, C-terminal domain"/>
    <property type="match status" value="1"/>
</dbReference>
<dbReference type="HAMAP" id="MF_00303">
    <property type="entry name" value="Trigger_factor_Tig"/>
    <property type="match status" value="1"/>
</dbReference>
<dbReference type="InterPro" id="IPR046357">
    <property type="entry name" value="PPIase_dom_sf"/>
</dbReference>
<dbReference type="InterPro" id="IPR001179">
    <property type="entry name" value="PPIase_FKBP_dom"/>
</dbReference>
<dbReference type="InterPro" id="IPR005215">
    <property type="entry name" value="Trig_fac"/>
</dbReference>
<dbReference type="InterPro" id="IPR008880">
    <property type="entry name" value="Trigger_fac_C"/>
</dbReference>
<dbReference type="InterPro" id="IPR037041">
    <property type="entry name" value="Trigger_fac_C_sf"/>
</dbReference>
<dbReference type="InterPro" id="IPR008881">
    <property type="entry name" value="Trigger_fac_ribosome-bd_bac"/>
</dbReference>
<dbReference type="InterPro" id="IPR036611">
    <property type="entry name" value="Trigger_fac_ribosome-bd_sf"/>
</dbReference>
<dbReference type="InterPro" id="IPR027304">
    <property type="entry name" value="Trigger_fact/SurA_dom_sf"/>
</dbReference>
<dbReference type="NCBIfam" id="TIGR00115">
    <property type="entry name" value="tig"/>
    <property type="match status" value="1"/>
</dbReference>
<dbReference type="PANTHER" id="PTHR30560">
    <property type="entry name" value="TRIGGER FACTOR CHAPERONE AND PEPTIDYL-PROLYL CIS/TRANS ISOMERASE"/>
    <property type="match status" value="1"/>
</dbReference>
<dbReference type="PANTHER" id="PTHR30560:SF3">
    <property type="entry name" value="TRIGGER FACTOR-LIKE PROTEIN TIG, CHLOROPLASTIC"/>
    <property type="match status" value="1"/>
</dbReference>
<dbReference type="Pfam" id="PF00254">
    <property type="entry name" value="FKBP_C"/>
    <property type="match status" value="1"/>
</dbReference>
<dbReference type="Pfam" id="PF05698">
    <property type="entry name" value="Trigger_C"/>
    <property type="match status" value="1"/>
</dbReference>
<dbReference type="Pfam" id="PF05697">
    <property type="entry name" value="Trigger_N"/>
    <property type="match status" value="1"/>
</dbReference>
<dbReference type="PIRSF" id="PIRSF003095">
    <property type="entry name" value="Trigger_factor"/>
    <property type="match status" value="1"/>
</dbReference>
<dbReference type="SUPFAM" id="SSF54534">
    <property type="entry name" value="FKBP-like"/>
    <property type="match status" value="1"/>
</dbReference>
<dbReference type="SUPFAM" id="SSF109998">
    <property type="entry name" value="Triger factor/SurA peptide-binding domain-like"/>
    <property type="match status" value="1"/>
</dbReference>
<dbReference type="SUPFAM" id="SSF102735">
    <property type="entry name" value="Trigger factor ribosome-binding domain"/>
    <property type="match status" value="1"/>
</dbReference>
<dbReference type="PROSITE" id="PS50059">
    <property type="entry name" value="FKBP_PPIASE"/>
    <property type="match status" value="1"/>
</dbReference>
<sequence length="432" mass="47978">MQVSVETTQGLGRRVTITIAADSIETAVKSELVNVAKKVRIDGFRKGKVPMNIVAQRYGASVRQDVLGDLMSRNFVDAIIKEKINPAGAPNYVPGEYKVGEDFTYSVEFEVYPEVELTGLESIEVEKPVVEVTDADVDVMLDTLRKQQATWKEKDGAADAEDRVTIDFTGSVDGEEFEGGKATDFVLAMGQGRMIPGFEDGVKGHKAGEEFTIDVTFPEEYHAENLKGKAAKFVINLKKVEERGLPELTEEFIKRFGVEDGSVAGLRAEVRKNMERELKGAVRNRVKSQAIEGLVKANDIDVPAALIDSEIDVLRRQAAQRFGGNEKQALELPRELFEEQAKRRVVVGLLLGEVIRTNELKADEERVKGLIEEMASAYEDPKEVIEFYSKNKELMDNMRNVALEEQAVEAVLAKAKVSEKATSFNELMNQQA</sequence>
<organism>
    <name type="scientific">Salmonella choleraesuis (strain SC-B67)</name>
    <dbReference type="NCBI Taxonomy" id="321314"/>
    <lineage>
        <taxon>Bacteria</taxon>
        <taxon>Pseudomonadati</taxon>
        <taxon>Pseudomonadota</taxon>
        <taxon>Gammaproteobacteria</taxon>
        <taxon>Enterobacterales</taxon>
        <taxon>Enterobacteriaceae</taxon>
        <taxon>Salmonella</taxon>
    </lineage>
</organism>
<reference key="1">
    <citation type="journal article" date="2005" name="Nucleic Acids Res.">
        <title>The genome sequence of Salmonella enterica serovar Choleraesuis, a highly invasive and resistant zoonotic pathogen.</title>
        <authorList>
            <person name="Chiu C.-H."/>
            <person name="Tang P."/>
            <person name="Chu C."/>
            <person name="Hu S."/>
            <person name="Bao Q."/>
            <person name="Yu J."/>
            <person name="Chou Y.-Y."/>
            <person name="Wang H.-S."/>
            <person name="Lee Y.-S."/>
        </authorList>
    </citation>
    <scope>NUCLEOTIDE SEQUENCE [LARGE SCALE GENOMIC DNA]</scope>
    <source>
        <strain>SC-B67</strain>
    </source>
</reference>
<proteinExistence type="inferred from homology"/>